<accession>Q9CZM2</accession>
<accession>Q9CWI5</accession>
<comment type="function">
    <text evidence="4">Component of the large ribosomal subunit (PubMed:36517592). The ribosome is a large ribonucleoprotein complex responsible for the synthesis of proteins in the cell (PubMed:36517592).</text>
</comment>
<comment type="subunit">
    <text evidence="4">Component of the large ribosomal subunit. Interacts with IFIT1 (via TPR repeats 1-4).</text>
</comment>
<comment type="subcellular location">
    <subcellularLocation>
        <location evidence="4">Cytoplasm</location>
    </subcellularLocation>
</comment>
<comment type="similarity">
    <text evidence="5">Belongs to the eukaryotic ribosomal protein eL15 family.</text>
</comment>
<keyword id="KW-0002">3D-structure</keyword>
<keyword id="KW-0963">Cytoplasm</keyword>
<keyword id="KW-1017">Isopeptide bond</keyword>
<keyword id="KW-0449">Lipoprotein</keyword>
<keyword id="KW-0519">Myristate</keyword>
<keyword id="KW-0597">Phosphoprotein</keyword>
<keyword id="KW-1185">Reference proteome</keyword>
<keyword id="KW-0687">Ribonucleoprotein</keyword>
<keyword id="KW-0689">Ribosomal protein</keyword>
<keyword id="KW-0832">Ubl conjugation</keyword>
<gene>
    <name type="primary">Rpl15</name>
</gene>
<proteinExistence type="evidence at protein level"/>
<sequence>MGAYKYIQELWRKKQSDVMRFLLRVRCWQYRQLSALHRAPRPTRPDKARRLGYKAKQGYVIYRIRVRRGGRKRPVPKGATYGKPVHHGVNQLKFARSLQSVAEERAGRHCGALRVLNSYWVGEDSTYKFFEVILIDPFHKAIRRNPDTQWITKPVHKHREMRGLTSAGRKSRGLGKGHKFHHTIGGSRRAAWRRRNTLQLHRYR</sequence>
<feature type="initiator methionine" description="Removed" evidence="1">
    <location>
        <position position="1"/>
    </location>
</feature>
<feature type="chain" id="PRO_0000127528" description="Large ribosomal subunit protein eL15">
    <location>
        <begin position="2"/>
        <end position="204"/>
    </location>
</feature>
<feature type="region of interest" description="Disordered" evidence="3">
    <location>
        <begin position="165"/>
        <end position="186"/>
    </location>
</feature>
<feature type="compositionally biased region" description="Basic residues" evidence="3">
    <location>
        <begin position="169"/>
        <end position="182"/>
    </location>
</feature>
<feature type="modified residue" description="Phosphoserine" evidence="2">
    <location>
        <position position="34"/>
    </location>
</feature>
<feature type="modified residue" description="Phosphoserine" evidence="1">
    <location>
        <position position="97"/>
    </location>
</feature>
<feature type="modified residue" description="Phosphoserine" evidence="1">
    <location>
        <position position="100"/>
    </location>
</feature>
<feature type="lipid moiety-binding region" description="N-myristoyl glycine" evidence="1">
    <location>
        <position position="2"/>
    </location>
</feature>
<feature type="cross-link" description="Glycyl lysine isopeptide (Lys-Gly) (interchain with G-Cter in SUMO2)" evidence="1">
    <location>
        <position position="83"/>
    </location>
</feature>
<feature type="sequence conflict" description="In Ref. 1; BAB27107." evidence="5" ref="1">
    <original>R</original>
    <variation>G</variation>
    <location>
        <position position="194"/>
    </location>
</feature>
<organism>
    <name type="scientific">Mus musculus</name>
    <name type="common">Mouse</name>
    <dbReference type="NCBI Taxonomy" id="10090"/>
    <lineage>
        <taxon>Eukaryota</taxon>
        <taxon>Metazoa</taxon>
        <taxon>Chordata</taxon>
        <taxon>Craniata</taxon>
        <taxon>Vertebrata</taxon>
        <taxon>Euteleostomi</taxon>
        <taxon>Mammalia</taxon>
        <taxon>Eutheria</taxon>
        <taxon>Euarchontoglires</taxon>
        <taxon>Glires</taxon>
        <taxon>Rodentia</taxon>
        <taxon>Myomorpha</taxon>
        <taxon>Muroidea</taxon>
        <taxon>Muridae</taxon>
        <taxon>Murinae</taxon>
        <taxon>Mus</taxon>
        <taxon>Mus</taxon>
    </lineage>
</organism>
<evidence type="ECO:0000250" key="1">
    <source>
        <dbReference type="UniProtKB" id="P61313"/>
    </source>
</evidence>
<evidence type="ECO:0000250" key="2">
    <source>
        <dbReference type="UniProtKB" id="P61314"/>
    </source>
</evidence>
<evidence type="ECO:0000256" key="3">
    <source>
        <dbReference type="SAM" id="MobiDB-lite"/>
    </source>
</evidence>
<evidence type="ECO:0000269" key="4">
    <source>
    </source>
</evidence>
<evidence type="ECO:0000305" key="5"/>
<evidence type="ECO:0007744" key="6">
    <source>
        <dbReference type="PDB" id="7CPU"/>
    </source>
</evidence>
<evidence type="ECO:0007744" key="7">
    <source>
        <dbReference type="PDB" id="7CPV"/>
    </source>
</evidence>
<dbReference type="EMBL" id="AK002234">
    <property type="protein sequence ID" value="BAB21952.1"/>
    <property type="molecule type" value="mRNA"/>
</dbReference>
<dbReference type="EMBL" id="AK010319">
    <property type="protein sequence ID" value="BAB26850.1"/>
    <property type="molecule type" value="mRNA"/>
</dbReference>
<dbReference type="EMBL" id="AK010674">
    <property type="protein sequence ID" value="BAB27107.1"/>
    <property type="molecule type" value="mRNA"/>
</dbReference>
<dbReference type="EMBL" id="AK010916">
    <property type="protein sequence ID" value="BAB27266.1"/>
    <property type="molecule type" value="mRNA"/>
</dbReference>
<dbReference type="EMBL" id="AK010931">
    <property type="protein sequence ID" value="BAB27275.1"/>
    <property type="molecule type" value="mRNA"/>
</dbReference>
<dbReference type="EMBL" id="AK012025">
    <property type="protein sequence ID" value="BAB27981.1"/>
    <property type="molecule type" value="mRNA"/>
</dbReference>
<dbReference type="EMBL" id="BC079842">
    <property type="protein sequence ID" value="AAH79842.1"/>
    <property type="molecule type" value="mRNA"/>
</dbReference>
<dbReference type="EMBL" id="BC081441">
    <property type="protein sequence ID" value="AAH81441.1"/>
    <property type="molecule type" value="mRNA"/>
</dbReference>
<dbReference type="EMBL" id="BC081442">
    <property type="protein sequence ID" value="AAH81442.1"/>
    <property type="molecule type" value="mRNA"/>
</dbReference>
<dbReference type="CCDS" id="CCDS36812.1"/>
<dbReference type="RefSeq" id="NP_001346826.1">
    <property type="nucleotide sequence ID" value="NM_001359897.1"/>
</dbReference>
<dbReference type="RefSeq" id="NP_001346828.1">
    <property type="nucleotide sequence ID" value="NM_001359899.1"/>
</dbReference>
<dbReference type="RefSeq" id="NP_079862.1">
    <property type="nucleotide sequence ID" value="NM_025586.3"/>
</dbReference>
<dbReference type="RefSeq" id="XP_006518143.1">
    <property type="nucleotide sequence ID" value="XM_006518080.3"/>
</dbReference>
<dbReference type="RefSeq" id="XP_006518144.1">
    <property type="nucleotide sequence ID" value="XM_006518081.3"/>
</dbReference>
<dbReference type="PDB" id="6SWA">
    <property type="method" value="EM"/>
    <property type="resolution" value="3.10 A"/>
    <property type="chains" value="M=1-204"/>
</dbReference>
<dbReference type="PDB" id="7CPU">
    <property type="method" value="EM"/>
    <property type="resolution" value="2.82 A"/>
    <property type="chains" value="LN=1-204"/>
</dbReference>
<dbReference type="PDB" id="7CPV">
    <property type="method" value="EM"/>
    <property type="resolution" value="3.03 A"/>
    <property type="chains" value="LN=1-204"/>
</dbReference>
<dbReference type="PDB" id="7LS1">
    <property type="method" value="EM"/>
    <property type="resolution" value="3.30 A"/>
    <property type="chains" value="H1=1-204"/>
</dbReference>
<dbReference type="PDB" id="7LS2">
    <property type="method" value="EM"/>
    <property type="resolution" value="3.10 A"/>
    <property type="chains" value="H1=1-204"/>
</dbReference>
<dbReference type="PDBsum" id="6SWA"/>
<dbReference type="PDBsum" id="7CPU"/>
<dbReference type="PDBsum" id="7CPV"/>
<dbReference type="PDBsum" id="7LS1"/>
<dbReference type="PDBsum" id="7LS2"/>
<dbReference type="EMDB" id="EMD-10321"/>
<dbReference type="EMDB" id="EMD-23500"/>
<dbReference type="EMDB" id="EMD-23501"/>
<dbReference type="EMDB" id="EMD-30432"/>
<dbReference type="EMDB" id="EMD-30433"/>
<dbReference type="SMR" id="Q9CZM2"/>
<dbReference type="BioGRID" id="211504">
    <property type="interactions" value="94"/>
</dbReference>
<dbReference type="ComplexPortal" id="CPX-5262">
    <property type="entry name" value="60S cytosolic large ribosomal subunit"/>
</dbReference>
<dbReference type="ComplexPortal" id="CPX-7662">
    <property type="entry name" value="60S cytosolic large ribosomal subunit, testis-specific variant"/>
</dbReference>
<dbReference type="ComplexPortal" id="CPX-7663">
    <property type="entry name" value="60S cytosolic large ribosomal subunit, striated muscle variant"/>
</dbReference>
<dbReference type="CORUM" id="Q9CZM2"/>
<dbReference type="FunCoup" id="Q9CZM2">
    <property type="interactions" value="3153"/>
</dbReference>
<dbReference type="IntAct" id="Q9CZM2">
    <property type="interactions" value="5"/>
</dbReference>
<dbReference type="MINT" id="Q9CZM2"/>
<dbReference type="STRING" id="10090.ENSMUSP00000079163"/>
<dbReference type="GlyGen" id="Q9CZM2">
    <property type="glycosylation" value="1 site, 1 O-linked glycan (1 site)"/>
</dbReference>
<dbReference type="iPTMnet" id="Q9CZM2"/>
<dbReference type="PhosphoSitePlus" id="Q9CZM2"/>
<dbReference type="SwissPalm" id="Q9CZM2"/>
<dbReference type="jPOST" id="Q9CZM2"/>
<dbReference type="PaxDb" id="10090-ENSMUSP00000079163"/>
<dbReference type="ProteomicsDB" id="254889"/>
<dbReference type="Pumba" id="Q9CZM2"/>
<dbReference type="Antibodypedia" id="11374">
    <property type="antibodies" value="241 antibodies from 30 providers"/>
</dbReference>
<dbReference type="DNASU" id="66480"/>
<dbReference type="Ensembl" id="ENSMUST00000079419.12">
    <property type="protein sequence ID" value="ENSMUSP00000078388.5"/>
    <property type="gene ID" value="ENSMUSG00000012405.17"/>
</dbReference>
<dbReference type="Ensembl" id="ENSMUST00000080281.14">
    <property type="protein sequence ID" value="ENSMUSP00000079163.8"/>
    <property type="gene ID" value="ENSMUSG00000012405.17"/>
</dbReference>
<dbReference type="Ensembl" id="ENSMUST00000100799.9">
    <property type="protein sequence ID" value="ENSMUSP00000098362.3"/>
    <property type="gene ID" value="ENSMUSG00000012405.17"/>
</dbReference>
<dbReference type="Ensembl" id="ENSMUST00000112598.9">
    <property type="protein sequence ID" value="ENSMUSP00000108217.2"/>
    <property type="gene ID" value="ENSMUSG00000012405.17"/>
</dbReference>
<dbReference type="GeneID" id="66480"/>
<dbReference type="KEGG" id="mmu:66480"/>
<dbReference type="UCSC" id="uc007shr.1">
    <property type="organism name" value="mouse"/>
</dbReference>
<dbReference type="AGR" id="MGI:1913730"/>
<dbReference type="CTD" id="6138"/>
<dbReference type="MGI" id="MGI:1913730">
    <property type="gene designation" value="Rpl15"/>
</dbReference>
<dbReference type="VEuPathDB" id="HostDB:ENSMUSG00000012405"/>
<dbReference type="eggNOG" id="KOG1678">
    <property type="taxonomic scope" value="Eukaryota"/>
</dbReference>
<dbReference type="GeneTree" id="ENSGT00910000144184"/>
<dbReference type="HOGENOM" id="CLU_080796_0_0_1"/>
<dbReference type="InParanoid" id="Q9CZM2"/>
<dbReference type="OMA" id="YIRDAWK"/>
<dbReference type="OrthoDB" id="10255148at2759"/>
<dbReference type="PhylomeDB" id="Q9CZM2"/>
<dbReference type="TreeFam" id="TF300050"/>
<dbReference type="Reactome" id="R-MMU-156827">
    <property type="pathway name" value="L13a-mediated translational silencing of Ceruloplasmin expression"/>
</dbReference>
<dbReference type="Reactome" id="R-MMU-1799339">
    <property type="pathway name" value="SRP-dependent cotranslational protein targeting to membrane"/>
</dbReference>
<dbReference type="Reactome" id="R-MMU-6791226">
    <property type="pathway name" value="Major pathway of rRNA processing in the nucleolus and cytosol"/>
</dbReference>
<dbReference type="Reactome" id="R-MMU-72689">
    <property type="pathway name" value="Formation of a pool of free 40S subunits"/>
</dbReference>
<dbReference type="Reactome" id="R-MMU-72706">
    <property type="pathway name" value="GTP hydrolysis and joining of the 60S ribosomal subunit"/>
</dbReference>
<dbReference type="Reactome" id="R-MMU-975956">
    <property type="pathway name" value="Nonsense Mediated Decay (NMD) independent of the Exon Junction Complex (EJC)"/>
</dbReference>
<dbReference type="Reactome" id="R-MMU-975957">
    <property type="pathway name" value="Nonsense Mediated Decay (NMD) enhanced by the Exon Junction Complex (EJC)"/>
</dbReference>
<dbReference type="BioGRID-ORCS" id="66480">
    <property type="hits" value="10 hits in 39 CRISPR screens"/>
</dbReference>
<dbReference type="ChiTaRS" id="Rpl15">
    <property type="organism name" value="mouse"/>
</dbReference>
<dbReference type="PRO" id="PR:Q9CZM2"/>
<dbReference type="Proteomes" id="UP000000589">
    <property type="component" value="Chromosome 14"/>
</dbReference>
<dbReference type="RNAct" id="Q9CZM2">
    <property type="molecule type" value="protein"/>
</dbReference>
<dbReference type="Bgee" id="ENSMUSG00000012405">
    <property type="expression patterns" value="Expressed in epiblast cell in embryo and 258 other cell types or tissues"/>
</dbReference>
<dbReference type="ExpressionAtlas" id="Q9CZM2">
    <property type="expression patterns" value="baseline and differential"/>
</dbReference>
<dbReference type="GO" id="GO:0005737">
    <property type="term" value="C:cytoplasm"/>
    <property type="evidence" value="ECO:0000314"/>
    <property type="project" value="ComplexPortal"/>
</dbReference>
<dbReference type="GO" id="GO:0005829">
    <property type="term" value="C:cytosol"/>
    <property type="evidence" value="ECO:0000304"/>
    <property type="project" value="Reactome"/>
</dbReference>
<dbReference type="GO" id="GO:0022625">
    <property type="term" value="C:cytosolic large ribosomal subunit"/>
    <property type="evidence" value="ECO:0000314"/>
    <property type="project" value="UniProtKB"/>
</dbReference>
<dbReference type="GO" id="GO:0005634">
    <property type="term" value="C:nucleus"/>
    <property type="evidence" value="ECO:0007669"/>
    <property type="project" value="Ensembl"/>
</dbReference>
<dbReference type="GO" id="GO:0098794">
    <property type="term" value="C:postsynapse"/>
    <property type="evidence" value="ECO:0000303"/>
    <property type="project" value="SynGO"/>
</dbReference>
<dbReference type="GO" id="GO:0098793">
    <property type="term" value="C:presynapse"/>
    <property type="evidence" value="ECO:0000303"/>
    <property type="project" value="SynGO"/>
</dbReference>
<dbReference type="GO" id="GO:0005840">
    <property type="term" value="C:ribosome"/>
    <property type="evidence" value="ECO:0000303"/>
    <property type="project" value="SynGO"/>
</dbReference>
<dbReference type="GO" id="GO:0045202">
    <property type="term" value="C:synapse"/>
    <property type="evidence" value="ECO:0000314"/>
    <property type="project" value="SynGO"/>
</dbReference>
<dbReference type="GO" id="GO:0003735">
    <property type="term" value="F:structural constituent of ribosome"/>
    <property type="evidence" value="ECO:0000314"/>
    <property type="project" value="UniProtKB"/>
</dbReference>
<dbReference type="GO" id="GO:0002181">
    <property type="term" value="P:cytoplasmic translation"/>
    <property type="evidence" value="ECO:0000303"/>
    <property type="project" value="ComplexPortal"/>
</dbReference>
<dbReference type="GO" id="GO:0140242">
    <property type="term" value="P:translation at postsynapse"/>
    <property type="evidence" value="ECO:0000303"/>
    <property type="project" value="SynGO"/>
</dbReference>
<dbReference type="GO" id="GO:0140236">
    <property type="term" value="P:translation at presynapse"/>
    <property type="evidence" value="ECO:0000303"/>
    <property type="project" value="SynGO"/>
</dbReference>
<dbReference type="FunFam" id="3.40.1120.10:FF:000001">
    <property type="entry name" value="Ribosomal protein L15"/>
    <property type="match status" value="1"/>
</dbReference>
<dbReference type="Gene3D" id="3.40.1120.10">
    <property type="entry name" value="Ribosomal protein l15e"/>
    <property type="match status" value="1"/>
</dbReference>
<dbReference type="InterPro" id="IPR024794">
    <property type="entry name" value="Rbsml_eL15_core_dom_sf"/>
</dbReference>
<dbReference type="InterPro" id="IPR000439">
    <property type="entry name" value="Ribosomal_eL15"/>
</dbReference>
<dbReference type="InterPro" id="IPR020925">
    <property type="entry name" value="Ribosomal_eL15_CS"/>
</dbReference>
<dbReference type="InterPro" id="IPR012678">
    <property type="entry name" value="Ribosomal_uL23/eL15/eS24_sf"/>
</dbReference>
<dbReference type="NCBIfam" id="NF003269">
    <property type="entry name" value="PRK04243.1"/>
    <property type="match status" value="1"/>
</dbReference>
<dbReference type="PANTHER" id="PTHR11847:SF4">
    <property type="entry name" value="LARGE RIBOSOMAL SUBUNIT PROTEIN EL15"/>
    <property type="match status" value="1"/>
</dbReference>
<dbReference type="PANTHER" id="PTHR11847">
    <property type="entry name" value="RIBOSOMAL PROTEIN L15"/>
    <property type="match status" value="1"/>
</dbReference>
<dbReference type="Pfam" id="PF00827">
    <property type="entry name" value="Ribosomal_L15e"/>
    <property type="match status" value="1"/>
</dbReference>
<dbReference type="SMART" id="SM01384">
    <property type="entry name" value="Ribosomal_L15e"/>
    <property type="match status" value="1"/>
</dbReference>
<dbReference type="SUPFAM" id="SSF54189">
    <property type="entry name" value="Ribosomal proteins S24e, L23 and L15e"/>
    <property type="match status" value="1"/>
</dbReference>
<dbReference type="PROSITE" id="PS01194">
    <property type="entry name" value="RIBOSOMAL_L15E"/>
    <property type="match status" value="1"/>
</dbReference>
<name>RL15_MOUSE</name>
<reference key="1">
    <citation type="journal article" date="2005" name="Science">
        <title>The transcriptional landscape of the mammalian genome.</title>
        <authorList>
            <person name="Carninci P."/>
            <person name="Kasukawa T."/>
            <person name="Katayama S."/>
            <person name="Gough J."/>
            <person name="Frith M.C."/>
            <person name="Maeda N."/>
            <person name="Oyama R."/>
            <person name="Ravasi T."/>
            <person name="Lenhard B."/>
            <person name="Wells C."/>
            <person name="Kodzius R."/>
            <person name="Shimokawa K."/>
            <person name="Bajic V.B."/>
            <person name="Brenner S.E."/>
            <person name="Batalov S."/>
            <person name="Forrest A.R."/>
            <person name="Zavolan M."/>
            <person name="Davis M.J."/>
            <person name="Wilming L.G."/>
            <person name="Aidinis V."/>
            <person name="Allen J.E."/>
            <person name="Ambesi-Impiombato A."/>
            <person name="Apweiler R."/>
            <person name="Aturaliya R.N."/>
            <person name="Bailey T.L."/>
            <person name="Bansal M."/>
            <person name="Baxter L."/>
            <person name="Beisel K.W."/>
            <person name="Bersano T."/>
            <person name="Bono H."/>
            <person name="Chalk A.M."/>
            <person name="Chiu K.P."/>
            <person name="Choudhary V."/>
            <person name="Christoffels A."/>
            <person name="Clutterbuck D.R."/>
            <person name="Crowe M.L."/>
            <person name="Dalla E."/>
            <person name="Dalrymple B.P."/>
            <person name="de Bono B."/>
            <person name="Della Gatta G."/>
            <person name="di Bernardo D."/>
            <person name="Down T."/>
            <person name="Engstrom P."/>
            <person name="Fagiolini M."/>
            <person name="Faulkner G."/>
            <person name="Fletcher C.F."/>
            <person name="Fukushima T."/>
            <person name="Furuno M."/>
            <person name="Futaki S."/>
            <person name="Gariboldi M."/>
            <person name="Georgii-Hemming P."/>
            <person name="Gingeras T.R."/>
            <person name="Gojobori T."/>
            <person name="Green R.E."/>
            <person name="Gustincich S."/>
            <person name="Harbers M."/>
            <person name="Hayashi Y."/>
            <person name="Hensch T.K."/>
            <person name="Hirokawa N."/>
            <person name="Hill D."/>
            <person name="Huminiecki L."/>
            <person name="Iacono M."/>
            <person name="Ikeo K."/>
            <person name="Iwama A."/>
            <person name="Ishikawa T."/>
            <person name="Jakt M."/>
            <person name="Kanapin A."/>
            <person name="Katoh M."/>
            <person name="Kawasawa Y."/>
            <person name="Kelso J."/>
            <person name="Kitamura H."/>
            <person name="Kitano H."/>
            <person name="Kollias G."/>
            <person name="Krishnan S.P."/>
            <person name="Kruger A."/>
            <person name="Kummerfeld S.K."/>
            <person name="Kurochkin I.V."/>
            <person name="Lareau L.F."/>
            <person name="Lazarevic D."/>
            <person name="Lipovich L."/>
            <person name="Liu J."/>
            <person name="Liuni S."/>
            <person name="McWilliam S."/>
            <person name="Madan Babu M."/>
            <person name="Madera M."/>
            <person name="Marchionni L."/>
            <person name="Matsuda H."/>
            <person name="Matsuzawa S."/>
            <person name="Miki H."/>
            <person name="Mignone F."/>
            <person name="Miyake S."/>
            <person name="Morris K."/>
            <person name="Mottagui-Tabar S."/>
            <person name="Mulder N."/>
            <person name="Nakano N."/>
            <person name="Nakauchi H."/>
            <person name="Ng P."/>
            <person name="Nilsson R."/>
            <person name="Nishiguchi S."/>
            <person name="Nishikawa S."/>
            <person name="Nori F."/>
            <person name="Ohara O."/>
            <person name="Okazaki Y."/>
            <person name="Orlando V."/>
            <person name="Pang K.C."/>
            <person name="Pavan W.J."/>
            <person name="Pavesi G."/>
            <person name="Pesole G."/>
            <person name="Petrovsky N."/>
            <person name="Piazza S."/>
            <person name="Reed J."/>
            <person name="Reid J.F."/>
            <person name="Ring B.Z."/>
            <person name="Ringwald M."/>
            <person name="Rost B."/>
            <person name="Ruan Y."/>
            <person name="Salzberg S.L."/>
            <person name="Sandelin A."/>
            <person name="Schneider C."/>
            <person name="Schoenbach C."/>
            <person name="Sekiguchi K."/>
            <person name="Semple C.A."/>
            <person name="Seno S."/>
            <person name="Sessa L."/>
            <person name="Sheng Y."/>
            <person name="Shibata Y."/>
            <person name="Shimada H."/>
            <person name="Shimada K."/>
            <person name="Silva D."/>
            <person name="Sinclair B."/>
            <person name="Sperling S."/>
            <person name="Stupka E."/>
            <person name="Sugiura K."/>
            <person name="Sultana R."/>
            <person name="Takenaka Y."/>
            <person name="Taki K."/>
            <person name="Tammoja K."/>
            <person name="Tan S.L."/>
            <person name="Tang S."/>
            <person name="Taylor M.S."/>
            <person name="Tegner J."/>
            <person name="Teichmann S.A."/>
            <person name="Ueda H.R."/>
            <person name="van Nimwegen E."/>
            <person name="Verardo R."/>
            <person name="Wei C.L."/>
            <person name="Yagi K."/>
            <person name="Yamanishi H."/>
            <person name="Zabarovsky E."/>
            <person name="Zhu S."/>
            <person name="Zimmer A."/>
            <person name="Hide W."/>
            <person name="Bult C."/>
            <person name="Grimmond S.M."/>
            <person name="Teasdale R.D."/>
            <person name="Liu E.T."/>
            <person name="Brusic V."/>
            <person name="Quackenbush J."/>
            <person name="Wahlestedt C."/>
            <person name="Mattick J.S."/>
            <person name="Hume D.A."/>
            <person name="Kai C."/>
            <person name="Sasaki D."/>
            <person name="Tomaru Y."/>
            <person name="Fukuda S."/>
            <person name="Kanamori-Katayama M."/>
            <person name="Suzuki M."/>
            <person name="Aoki J."/>
            <person name="Arakawa T."/>
            <person name="Iida J."/>
            <person name="Imamura K."/>
            <person name="Itoh M."/>
            <person name="Kato T."/>
            <person name="Kawaji H."/>
            <person name="Kawagashira N."/>
            <person name="Kawashima T."/>
            <person name="Kojima M."/>
            <person name="Kondo S."/>
            <person name="Konno H."/>
            <person name="Nakano K."/>
            <person name="Ninomiya N."/>
            <person name="Nishio T."/>
            <person name="Okada M."/>
            <person name="Plessy C."/>
            <person name="Shibata K."/>
            <person name="Shiraki T."/>
            <person name="Suzuki S."/>
            <person name="Tagami M."/>
            <person name="Waki K."/>
            <person name="Watahiki A."/>
            <person name="Okamura-Oho Y."/>
            <person name="Suzuki H."/>
            <person name="Kawai J."/>
            <person name="Hayashizaki Y."/>
        </authorList>
    </citation>
    <scope>NUCLEOTIDE SEQUENCE [LARGE SCALE MRNA]</scope>
    <source>
        <strain>C57BL/6J</strain>
        <tissue>Embryo</tissue>
        <tissue>Embryonic liver</tissue>
        <tissue>Embryonic stem cell</tissue>
        <tissue>Kidney</tissue>
    </source>
</reference>
<reference key="2">
    <citation type="journal article" date="2004" name="Genome Res.">
        <title>The status, quality, and expansion of the NIH full-length cDNA project: the Mammalian Gene Collection (MGC).</title>
        <authorList>
            <consortium name="The MGC Project Team"/>
        </authorList>
    </citation>
    <scope>NUCLEOTIDE SEQUENCE [LARGE SCALE MRNA]</scope>
    <source>
        <strain>C57BL/6J</strain>
        <tissue>Brain</tissue>
    </source>
</reference>
<reference key="3">
    <citation type="journal article" date="2010" name="Cell">
        <title>A tissue-specific atlas of mouse protein phosphorylation and expression.</title>
        <authorList>
            <person name="Huttlin E.L."/>
            <person name="Jedrychowski M.P."/>
            <person name="Elias J.E."/>
            <person name="Goswami T."/>
            <person name="Rad R."/>
            <person name="Beausoleil S.A."/>
            <person name="Villen J."/>
            <person name="Haas W."/>
            <person name="Sowa M.E."/>
            <person name="Gygi S.P."/>
        </authorList>
    </citation>
    <scope>IDENTIFICATION BY MASS SPECTROMETRY [LARGE SCALE ANALYSIS]</scope>
    <source>
        <tissue>Brain</tissue>
        <tissue>Brown adipose tissue</tissue>
        <tissue>Heart</tissue>
        <tissue>Kidney</tissue>
        <tissue>Liver</tissue>
        <tissue>Lung</tissue>
        <tissue>Pancreas</tissue>
        <tissue>Spleen</tissue>
        <tissue>Testis</tissue>
    </source>
</reference>
<reference evidence="6 7" key="4">
    <citation type="journal article" date="2022" name="Nature">
        <title>A male germ-cell-specific ribosome controls male fertility.</title>
        <authorList>
            <person name="Li H."/>
            <person name="Huo Y."/>
            <person name="He X."/>
            <person name="Yao L."/>
            <person name="Zhang H."/>
            <person name="Cui Y."/>
            <person name="Xiao H."/>
            <person name="Xie W."/>
            <person name="Zhang D."/>
            <person name="Wang Y."/>
            <person name="Zhang S."/>
            <person name="Tu H."/>
            <person name="Cheng Y."/>
            <person name="Guo Y."/>
            <person name="Cao X."/>
            <person name="Zhu Y."/>
            <person name="Jiang T."/>
            <person name="Guo X."/>
            <person name="Qin Y."/>
            <person name="Sha J."/>
        </authorList>
    </citation>
    <scope>STRUCTURE BY ELECTRON MICROSCOPY (3.03 ANGSTROMS) OF RIBOSOME</scope>
    <scope>FUNCTION</scope>
    <scope>SUBUNIT</scope>
    <scope>SUBCELLULAR LOCATION</scope>
</reference>
<protein>
    <recommendedName>
        <fullName evidence="5">Large ribosomal subunit protein eL15</fullName>
    </recommendedName>
    <alternativeName>
        <fullName>60S ribosomal protein L15</fullName>
    </alternativeName>
</protein>